<comment type="function">
    <text evidence="1">One of the primary rRNA binding proteins, it binds directly to 16S rRNA where it nucleates assembly of the body of the 30S subunit.</text>
</comment>
<comment type="function">
    <text evidence="1">With S5 and S12 plays an important role in translational accuracy.</text>
</comment>
<comment type="subunit">
    <text evidence="1">Part of the 30S ribosomal subunit. Contacts protein S5. The interaction surface between S4 and S5 is involved in control of translational fidelity.</text>
</comment>
<comment type="similarity">
    <text evidence="1">Belongs to the universal ribosomal protein uS4 family.</text>
</comment>
<organism>
    <name type="scientific">Histophilus somni (strain 2336)</name>
    <name type="common">Haemophilus somnus</name>
    <dbReference type="NCBI Taxonomy" id="228400"/>
    <lineage>
        <taxon>Bacteria</taxon>
        <taxon>Pseudomonadati</taxon>
        <taxon>Pseudomonadota</taxon>
        <taxon>Gammaproteobacteria</taxon>
        <taxon>Pasteurellales</taxon>
        <taxon>Pasteurellaceae</taxon>
        <taxon>Histophilus</taxon>
    </lineage>
</organism>
<dbReference type="EMBL" id="CP000947">
    <property type="protein sequence ID" value="ACA31773.1"/>
    <property type="molecule type" value="Genomic_DNA"/>
</dbReference>
<dbReference type="RefSeq" id="WP_012341035.1">
    <property type="nucleotide sequence ID" value="NC_010519.1"/>
</dbReference>
<dbReference type="SMR" id="B0UX38"/>
<dbReference type="STRING" id="228400.HSM_1977"/>
<dbReference type="GeneID" id="31488288"/>
<dbReference type="KEGG" id="hsm:HSM_1977"/>
<dbReference type="HOGENOM" id="CLU_092403_0_2_6"/>
<dbReference type="GO" id="GO:0015935">
    <property type="term" value="C:small ribosomal subunit"/>
    <property type="evidence" value="ECO:0007669"/>
    <property type="project" value="InterPro"/>
</dbReference>
<dbReference type="GO" id="GO:0019843">
    <property type="term" value="F:rRNA binding"/>
    <property type="evidence" value="ECO:0007669"/>
    <property type="project" value="UniProtKB-UniRule"/>
</dbReference>
<dbReference type="GO" id="GO:0003735">
    <property type="term" value="F:structural constituent of ribosome"/>
    <property type="evidence" value="ECO:0007669"/>
    <property type="project" value="InterPro"/>
</dbReference>
<dbReference type="GO" id="GO:0042274">
    <property type="term" value="P:ribosomal small subunit biogenesis"/>
    <property type="evidence" value="ECO:0007669"/>
    <property type="project" value="TreeGrafter"/>
</dbReference>
<dbReference type="GO" id="GO:0006412">
    <property type="term" value="P:translation"/>
    <property type="evidence" value="ECO:0007669"/>
    <property type="project" value="UniProtKB-UniRule"/>
</dbReference>
<dbReference type="CDD" id="cd00165">
    <property type="entry name" value="S4"/>
    <property type="match status" value="1"/>
</dbReference>
<dbReference type="FunFam" id="1.10.1050.10:FF:000001">
    <property type="entry name" value="30S ribosomal protein S4"/>
    <property type="match status" value="1"/>
</dbReference>
<dbReference type="FunFam" id="3.10.290.10:FF:000001">
    <property type="entry name" value="30S ribosomal protein S4"/>
    <property type="match status" value="1"/>
</dbReference>
<dbReference type="Gene3D" id="1.10.1050.10">
    <property type="entry name" value="Ribosomal Protein S4 Delta 41, Chain A, domain 1"/>
    <property type="match status" value="1"/>
</dbReference>
<dbReference type="Gene3D" id="3.10.290.10">
    <property type="entry name" value="RNA-binding S4 domain"/>
    <property type="match status" value="1"/>
</dbReference>
<dbReference type="HAMAP" id="MF_01306_B">
    <property type="entry name" value="Ribosomal_uS4_B"/>
    <property type="match status" value="1"/>
</dbReference>
<dbReference type="InterPro" id="IPR022801">
    <property type="entry name" value="Ribosomal_uS4"/>
</dbReference>
<dbReference type="InterPro" id="IPR005709">
    <property type="entry name" value="Ribosomal_uS4_bac-type"/>
</dbReference>
<dbReference type="InterPro" id="IPR018079">
    <property type="entry name" value="Ribosomal_uS4_CS"/>
</dbReference>
<dbReference type="InterPro" id="IPR001912">
    <property type="entry name" value="Ribosomal_uS4_N"/>
</dbReference>
<dbReference type="InterPro" id="IPR002942">
    <property type="entry name" value="S4_RNA-bd"/>
</dbReference>
<dbReference type="InterPro" id="IPR036986">
    <property type="entry name" value="S4_RNA-bd_sf"/>
</dbReference>
<dbReference type="NCBIfam" id="NF003717">
    <property type="entry name" value="PRK05327.1"/>
    <property type="match status" value="1"/>
</dbReference>
<dbReference type="NCBIfam" id="TIGR01017">
    <property type="entry name" value="rpsD_bact"/>
    <property type="match status" value="1"/>
</dbReference>
<dbReference type="PANTHER" id="PTHR11831">
    <property type="entry name" value="30S 40S RIBOSOMAL PROTEIN"/>
    <property type="match status" value="1"/>
</dbReference>
<dbReference type="PANTHER" id="PTHR11831:SF4">
    <property type="entry name" value="SMALL RIBOSOMAL SUBUNIT PROTEIN US4M"/>
    <property type="match status" value="1"/>
</dbReference>
<dbReference type="Pfam" id="PF00163">
    <property type="entry name" value="Ribosomal_S4"/>
    <property type="match status" value="1"/>
</dbReference>
<dbReference type="Pfam" id="PF01479">
    <property type="entry name" value="S4"/>
    <property type="match status" value="1"/>
</dbReference>
<dbReference type="SMART" id="SM01390">
    <property type="entry name" value="Ribosomal_S4"/>
    <property type="match status" value="1"/>
</dbReference>
<dbReference type="SMART" id="SM00363">
    <property type="entry name" value="S4"/>
    <property type="match status" value="1"/>
</dbReference>
<dbReference type="SUPFAM" id="SSF55174">
    <property type="entry name" value="Alpha-L RNA-binding motif"/>
    <property type="match status" value="1"/>
</dbReference>
<dbReference type="PROSITE" id="PS00632">
    <property type="entry name" value="RIBOSOMAL_S4"/>
    <property type="match status" value="1"/>
</dbReference>
<dbReference type="PROSITE" id="PS50889">
    <property type="entry name" value="S4"/>
    <property type="match status" value="1"/>
</dbReference>
<sequence length="206" mass="23492">MARYLGPKLKLSRREGTDLFLKSGVRAIDTKCKIDTAPGQHGARKPRLSDYGSQLREKQKVRRIYGILERQFRNYYKEANRLKGNTGENLLVLLEGRLDNVVYRMGFAATRAEARQLVSHKAIVVNGRVVNIPSFQVSVNDVVAVREKSKKQARIKASLELAEQREKPTWLEVEAAKMEGVFKRVPERSDLSADINEHLIVELYSK</sequence>
<evidence type="ECO:0000255" key="1">
    <source>
        <dbReference type="HAMAP-Rule" id="MF_01306"/>
    </source>
</evidence>
<evidence type="ECO:0000305" key="2"/>
<keyword id="KW-0687">Ribonucleoprotein</keyword>
<keyword id="KW-0689">Ribosomal protein</keyword>
<keyword id="KW-0694">RNA-binding</keyword>
<keyword id="KW-0699">rRNA-binding</keyword>
<accession>B0UX38</accession>
<protein>
    <recommendedName>
        <fullName evidence="1">Small ribosomal subunit protein uS4</fullName>
    </recommendedName>
    <alternativeName>
        <fullName evidence="2">30S ribosomal protein S4</fullName>
    </alternativeName>
</protein>
<proteinExistence type="inferred from homology"/>
<name>RS4_HISS2</name>
<reference key="1">
    <citation type="submission" date="2008-02" db="EMBL/GenBank/DDBJ databases">
        <title>Complete sequence of Haemophilus somnus 2336.</title>
        <authorList>
            <consortium name="US DOE Joint Genome Institute"/>
            <person name="Siddaramappa S."/>
            <person name="Duncan A.J."/>
            <person name="Challacombe J.F."/>
            <person name="Rainey D."/>
            <person name="Gillaspy A.F."/>
            <person name="Carson M."/>
            <person name="Gipson J."/>
            <person name="Gipson M."/>
            <person name="Bruce D."/>
            <person name="Detter J.C."/>
            <person name="Han C.S."/>
            <person name="Land M."/>
            <person name="Tapia R."/>
            <person name="Thompson L.S."/>
            <person name="Orvis J."/>
            <person name="Zaitshik J."/>
            <person name="Barnes G."/>
            <person name="Brettin T.S."/>
            <person name="Dyer D.W."/>
            <person name="Inzana T.J."/>
        </authorList>
    </citation>
    <scope>NUCLEOTIDE SEQUENCE [LARGE SCALE GENOMIC DNA]</scope>
    <source>
        <strain>2336</strain>
    </source>
</reference>
<gene>
    <name evidence="1" type="primary">rpsD</name>
    <name type="ordered locus">HSM_1977</name>
</gene>
<feature type="chain" id="PRO_1000085977" description="Small ribosomal subunit protein uS4">
    <location>
        <begin position="1"/>
        <end position="206"/>
    </location>
</feature>
<feature type="domain" description="S4 RNA-binding" evidence="1">
    <location>
        <begin position="96"/>
        <end position="156"/>
    </location>
</feature>